<geneLocation type="chloroplast"/>
<organism>
    <name type="scientific">Trieres chinensis</name>
    <name type="common">Marine centric diatom</name>
    <name type="synonym">Odontella sinensis</name>
    <dbReference type="NCBI Taxonomy" id="1514140"/>
    <lineage>
        <taxon>Eukaryota</taxon>
        <taxon>Sar</taxon>
        <taxon>Stramenopiles</taxon>
        <taxon>Ochrophyta</taxon>
        <taxon>Bacillariophyta</taxon>
        <taxon>Mediophyceae</taxon>
        <taxon>Biddulphiophycidae</taxon>
        <taxon>Eupodiscales</taxon>
        <taxon>Parodontellaceae</taxon>
        <taxon>Trieres</taxon>
    </lineage>
</organism>
<sequence>MNTKIGLSLSEKYYWSWKTKTSNCPCFSCSGEGNIVINKVSGEKYLQYNLTYLKDIWAPLKELNLEKQFDIIALVRGGGLTGQTESIQLGVARLLCQMNPQNRSVLKPFGFLTRDARIKERKKYGLRKARKAPQYSKR</sequence>
<feature type="chain" id="PRO_0000111458" description="Small ribosomal subunit protein uS9c">
    <location>
        <begin position="1"/>
        <end position="138"/>
    </location>
</feature>
<proteinExistence type="inferred from homology"/>
<reference key="1">
    <citation type="journal article" date="1995" name="Plant Mol. Biol. Rep.">
        <title>The chloroplast genome of a chlorophyll a+c-containing alga, Odontella sinensis.</title>
        <authorList>
            <person name="Kowallik K.V."/>
            <person name="Stoebe B."/>
            <person name="Schaffran I."/>
            <person name="Kroth-Pancic P."/>
            <person name="Freier U."/>
        </authorList>
    </citation>
    <scope>NUCLEOTIDE SEQUENCE [LARGE SCALE GENOMIC DNA]</scope>
</reference>
<keyword id="KW-0150">Chloroplast</keyword>
<keyword id="KW-0934">Plastid</keyword>
<keyword id="KW-0687">Ribonucleoprotein</keyword>
<keyword id="KW-0689">Ribosomal protein</keyword>
<evidence type="ECO:0000305" key="1"/>
<protein>
    <recommendedName>
        <fullName evidence="1">Small ribosomal subunit protein uS9c</fullName>
    </recommendedName>
    <alternativeName>
        <fullName>30S ribosomal protein S9, chloroplastic</fullName>
    </alternativeName>
</protein>
<dbReference type="EMBL" id="Z67753">
    <property type="protein sequence ID" value="CAA91625.1"/>
    <property type="molecule type" value="Genomic_DNA"/>
</dbReference>
<dbReference type="PIR" id="S78252">
    <property type="entry name" value="S78252"/>
</dbReference>
<dbReference type="RefSeq" id="NP_043593.1">
    <property type="nucleotide sequence ID" value="NC_001713.1"/>
</dbReference>
<dbReference type="SMR" id="P49497"/>
<dbReference type="GeneID" id="801810"/>
<dbReference type="GO" id="GO:0009507">
    <property type="term" value="C:chloroplast"/>
    <property type="evidence" value="ECO:0007669"/>
    <property type="project" value="UniProtKB-SubCell"/>
</dbReference>
<dbReference type="GO" id="GO:0015935">
    <property type="term" value="C:small ribosomal subunit"/>
    <property type="evidence" value="ECO:0007669"/>
    <property type="project" value="TreeGrafter"/>
</dbReference>
<dbReference type="GO" id="GO:0003723">
    <property type="term" value="F:RNA binding"/>
    <property type="evidence" value="ECO:0007669"/>
    <property type="project" value="TreeGrafter"/>
</dbReference>
<dbReference type="GO" id="GO:0003735">
    <property type="term" value="F:structural constituent of ribosome"/>
    <property type="evidence" value="ECO:0007669"/>
    <property type="project" value="InterPro"/>
</dbReference>
<dbReference type="GO" id="GO:0006412">
    <property type="term" value="P:translation"/>
    <property type="evidence" value="ECO:0007669"/>
    <property type="project" value="UniProtKB-UniRule"/>
</dbReference>
<dbReference type="FunFam" id="3.30.230.10:FF:000001">
    <property type="entry name" value="30S ribosomal protein S9"/>
    <property type="match status" value="1"/>
</dbReference>
<dbReference type="Gene3D" id="3.30.230.10">
    <property type="match status" value="1"/>
</dbReference>
<dbReference type="HAMAP" id="MF_00532_B">
    <property type="entry name" value="Ribosomal_uS9_B"/>
    <property type="match status" value="1"/>
</dbReference>
<dbReference type="InterPro" id="IPR020568">
    <property type="entry name" value="Ribosomal_Su5_D2-typ_SF"/>
</dbReference>
<dbReference type="InterPro" id="IPR000754">
    <property type="entry name" value="Ribosomal_uS9"/>
</dbReference>
<dbReference type="InterPro" id="IPR023035">
    <property type="entry name" value="Ribosomal_uS9_bac/plastid"/>
</dbReference>
<dbReference type="InterPro" id="IPR020574">
    <property type="entry name" value="Ribosomal_uS9_CS"/>
</dbReference>
<dbReference type="InterPro" id="IPR014721">
    <property type="entry name" value="Ribsml_uS5_D2-typ_fold_subgr"/>
</dbReference>
<dbReference type="NCBIfam" id="NF001099">
    <property type="entry name" value="PRK00132.1"/>
    <property type="match status" value="1"/>
</dbReference>
<dbReference type="PANTHER" id="PTHR21569">
    <property type="entry name" value="RIBOSOMAL PROTEIN S9"/>
    <property type="match status" value="1"/>
</dbReference>
<dbReference type="PANTHER" id="PTHR21569:SF1">
    <property type="entry name" value="SMALL RIBOSOMAL SUBUNIT PROTEIN US9M"/>
    <property type="match status" value="1"/>
</dbReference>
<dbReference type="Pfam" id="PF00380">
    <property type="entry name" value="Ribosomal_S9"/>
    <property type="match status" value="1"/>
</dbReference>
<dbReference type="SUPFAM" id="SSF54211">
    <property type="entry name" value="Ribosomal protein S5 domain 2-like"/>
    <property type="match status" value="1"/>
</dbReference>
<dbReference type="PROSITE" id="PS00360">
    <property type="entry name" value="RIBOSOMAL_S9"/>
    <property type="match status" value="1"/>
</dbReference>
<gene>
    <name type="primary">rps9</name>
</gene>
<accession>P49497</accession>
<name>RR9_TRICV</name>
<comment type="subcellular location">
    <subcellularLocation>
        <location>Plastid</location>
        <location>Chloroplast</location>
    </subcellularLocation>
</comment>
<comment type="similarity">
    <text evidence="1">Belongs to the universal ribosomal protein uS9 family.</text>
</comment>